<reference key="1">
    <citation type="submission" date="1999-10" db="EMBL/GenBank/DDBJ databases">
        <title>Structural analysis of Arabidopsis thaliana chromosome 5. XI.</title>
        <authorList>
            <person name="Kaneko T."/>
            <person name="Katoh T."/>
            <person name="Asamizu E."/>
            <person name="Sato S."/>
            <person name="Nakamura Y."/>
            <person name="Kotani H."/>
            <person name="Tabata S."/>
        </authorList>
    </citation>
    <scope>NUCLEOTIDE SEQUENCE [LARGE SCALE GENOMIC DNA]</scope>
    <source>
        <strain>cv. Columbia</strain>
    </source>
</reference>
<reference key="2">
    <citation type="journal article" date="2017" name="Plant J.">
        <title>Araport11: a complete reannotation of the Arabidopsis thaliana reference genome.</title>
        <authorList>
            <person name="Cheng C.Y."/>
            <person name="Krishnakumar V."/>
            <person name="Chan A.P."/>
            <person name="Thibaud-Nissen F."/>
            <person name="Schobel S."/>
            <person name="Town C.D."/>
        </authorList>
    </citation>
    <scope>GENOME REANNOTATION</scope>
    <source>
        <strain>cv. Columbia</strain>
    </source>
</reference>
<reference key="3">
    <citation type="journal article" date="2010" name="BMC Genomics">
        <title>Genome-wide cloning and sequence analysis of leucine-rich repeat receptor-like protein kinase genes in Arabidopsis thaliana.</title>
        <authorList>
            <person name="Gou X."/>
            <person name="He K."/>
            <person name="Yang H."/>
            <person name="Yuan T."/>
            <person name="Lin H."/>
            <person name="Clouse S.D."/>
            <person name="Li J."/>
        </authorList>
    </citation>
    <scope>NUCLEOTIDE SEQUENCE [LARGE SCALE MRNA]</scope>
    <source>
        <strain>cv. Columbia</strain>
    </source>
</reference>
<feature type="signal peptide" evidence="1">
    <location>
        <begin position="1"/>
        <end position="24"/>
    </location>
</feature>
<feature type="chain" id="PRO_0000387562" description="Probable LRR receptor-like serine/threonine-protein kinase At5g37450">
    <location>
        <begin position="25"/>
        <end position="959"/>
    </location>
</feature>
<feature type="topological domain" description="Extracellular" evidence="1">
    <location>
        <begin position="25"/>
        <end position="565"/>
    </location>
</feature>
<feature type="transmembrane region" description="Helical" evidence="1">
    <location>
        <begin position="566"/>
        <end position="586"/>
    </location>
</feature>
<feature type="topological domain" description="Cytoplasmic" evidence="1">
    <location>
        <begin position="587"/>
        <end position="959"/>
    </location>
</feature>
<feature type="repeat" description="LRR 1">
    <location>
        <begin position="79"/>
        <end position="100"/>
    </location>
</feature>
<feature type="repeat" description="LRR 2">
    <location>
        <begin position="101"/>
        <end position="124"/>
    </location>
</feature>
<feature type="repeat" description="LRR 3">
    <location>
        <begin position="125"/>
        <end position="148"/>
    </location>
</feature>
<feature type="repeat" description="LRR 4">
    <location>
        <begin position="149"/>
        <end position="172"/>
    </location>
</feature>
<feature type="repeat" description="LRR 5">
    <location>
        <begin position="173"/>
        <end position="198"/>
    </location>
</feature>
<feature type="repeat" description="LRR 6">
    <location>
        <begin position="200"/>
        <end position="220"/>
    </location>
</feature>
<feature type="repeat" description="LRR 7">
    <location>
        <begin position="221"/>
        <end position="244"/>
    </location>
</feature>
<feature type="repeat" description="LRR 8">
    <location>
        <begin position="246"/>
        <end position="268"/>
    </location>
</feature>
<feature type="repeat" description="LRR 9">
    <location>
        <begin position="269"/>
        <end position="292"/>
    </location>
</feature>
<feature type="repeat" description="LRR 10">
    <location>
        <begin position="294"/>
        <end position="314"/>
    </location>
</feature>
<feature type="repeat" description="LRR 11">
    <location>
        <begin position="315"/>
        <end position="338"/>
    </location>
</feature>
<feature type="repeat" description="LRR 12">
    <location>
        <begin position="341"/>
        <end position="366"/>
    </location>
</feature>
<feature type="domain" description="Protein kinase" evidence="2">
    <location>
        <begin position="631"/>
        <end position="906"/>
    </location>
</feature>
<feature type="active site" description="Proton acceptor" evidence="2 3">
    <location>
        <position position="755"/>
    </location>
</feature>
<feature type="binding site" evidence="2">
    <location>
        <begin position="637"/>
        <end position="645"/>
    </location>
    <ligand>
        <name>ATP</name>
        <dbReference type="ChEBI" id="CHEBI:30616"/>
    </ligand>
</feature>
<feature type="binding site" evidence="2">
    <location>
        <position position="659"/>
    </location>
    <ligand>
        <name>ATP</name>
        <dbReference type="ChEBI" id="CHEBI:30616"/>
    </ligand>
</feature>
<feature type="glycosylation site" description="N-linked (GlcNAc...) asparagine" evidence="1">
    <location>
        <position position="62"/>
    </location>
</feature>
<feature type="glycosylation site" description="N-linked (GlcNAc...) asparagine" evidence="1">
    <location>
        <position position="88"/>
    </location>
</feature>
<feature type="glycosylation site" description="N-linked (GlcNAc...) asparagine" evidence="1">
    <location>
        <position position="102"/>
    </location>
</feature>
<feature type="glycosylation site" description="N-linked (GlcNAc...) asparagine" evidence="1">
    <location>
        <position position="123"/>
    </location>
</feature>
<feature type="glycosylation site" description="N-linked (GlcNAc...) asparagine" evidence="1">
    <location>
        <position position="182"/>
    </location>
</feature>
<feature type="glycosylation site" description="N-linked (GlcNAc...) asparagine" evidence="1">
    <location>
        <position position="293"/>
    </location>
</feature>
<feature type="glycosylation site" description="N-linked (GlcNAc...) asparagine" evidence="1">
    <location>
        <position position="311"/>
    </location>
</feature>
<feature type="glycosylation site" description="N-linked (GlcNAc...) asparagine" evidence="1">
    <location>
        <position position="327"/>
    </location>
</feature>
<feature type="glycosylation site" description="N-linked (GlcNAc...) asparagine" evidence="1">
    <location>
        <position position="358"/>
    </location>
</feature>
<feature type="glycosylation site" description="N-linked (GlcNAc...) asparagine" evidence="1">
    <location>
        <position position="369"/>
    </location>
</feature>
<feature type="glycosylation site" description="N-linked (GlcNAc...) asparagine" evidence="1">
    <location>
        <position position="510"/>
    </location>
</feature>
<organism>
    <name type="scientific">Arabidopsis thaliana</name>
    <name type="common">Mouse-ear cress</name>
    <dbReference type="NCBI Taxonomy" id="3702"/>
    <lineage>
        <taxon>Eukaryota</taxon>
        <taxon>Viridiplantae</taxon>
        <taxon>Streptophyta</taxon>
        <taxon>Embryophyta</taxon>
        <taxon>Tracheophyta</taxon>
        <taxon>Spermatophyta</taxon>
        <taxon>Magnoliopsida</taxon>
        <taxon>eudicotyledons</taxon>
        <taxon>Gunneridae</taxon>
        <taxon>Pentapetalae</taxon>
        <taxon>rosids</taxon>
        <taxon>malvids</taxon>
        <taxon>Brassicales</taxon>
        <taxon>Brassicaceae</taxon>
        <taxon>Camelineae</taxon>
        <taxon>Arabidopsis</taxon>
    </lineage>
</organism>
<comment type="catalytic activity">
    <reaction>
        <text>L-seryl-[protein] + ATP = O-phospho-L-seryl-[protein] + ADP + H(+)</text>
        <dbReference type="Rhea" id="RHEA:17989"/>
        <dbReference type="Rhea" id="RHEA-COMP:9863"/>
        <dbReference type="Rhea" id="RHEA-COMP:11604"/>
        <dbReference type="ChEBI" id="CHEBI:15378"/>
        <dbReference type="ChEBI" id="CHEBI:29999"/>
        <dbReference type="ChEBI" id="CHEBI:30616"/>
        <dbReference type="ChEBI" id="CHEBI:83421"/>
        <dbReference type="ChEBI" id="CHEBI:456216"/>
        <dbReference type="EC" id="2.7.11.1"/>
    </reaction>
</comment>
<comment type="catalytic activity">
    <reaction>
        <text>L-threonyl-[protein] + ATP = O-phospho-L-threonyl-[protein] + ADP + H(+)</text>
        <dbReference type="Rhea" id="RHEA:46608"/>
        <dbReference type="Rhea" id="RHEA-COMP:11060"/>
        <dbReference type="Rhea" id="RHEA-COMP:11605"/>
        <dbReference type="ChEBI" id="CHEBI:15378"/>
        <dbReference type="ChEBI" id="CHEBI:30013"/>
        <dbReference type="ChEBI" id="CHEBI:30616"/>
        <dbReference type="ChEBI" id="CHEBI:61977"/>
        <dbReference type="ChEBI" id="CHEBI:456216"/>
        <dbReference type="EC" id="2.7.11.1"/>
    </reaction>
</comment>
<comment type="interaction">
    <interactant intactId="EBI-20661217">
        <id>C0LGU1</id>
    </interactant>
    <interactant intactId="EBI-20651541">
        <id>C0LGJ9</id>
        <label>At2g02780</label>
    </interactant>
    <organismsDiffer>false</organismsDiffer>
    <experiments>2</experiments>
</comment>
<comment type="interaction">
    <interactant intactId="EBI-20661217">
        <id>C0LGU1</id>
    </interactant>
    <interactant intactId="EBI-16934827">
        <id>Q8W4S5</id>
        <label>At5g63710</label>
    </interactant>
    <organismsDiffer>false</organismsDiffer>
    <experiments>3</experiments>
</comment>
<comment type="subcellular location">
    <subcellularLocation>
        <location evidence="4">Membrane</location>
        <topology evidence="4">Single-pass type I membrane protein</topology>
    </subcellularLocation>
</comment>
<comment type="similarity">
    <text evidence="2">Belongs to the protein kinase superfamily. Ser/Thr protein kinase family.</text>
</comment>
<comment type="sequence caution" evidence="4">
    <conflict type="erroneous gene model prediction">
        <sequence resource="EMBL-CDS" id="AED94189"/>
    </conflict>
</comment>
<comment type="sequence caution" evidence="4">
    <conflict type="erroneous gene model prediction">
        <sequence resource="EMBL-CDS" id="BAB10966"/>
    </conflict>
</comment>
<proteinExistence type="evidence at protein level"/>
<keyword id="KW-0067">ATP-binding</keyword>
<keyword id="KW-0325">Glycoprotein</keyword>
<keyword id="KW-0418">Kinase</keyword>
<keyword id="KW-0433">Leucine-rich repeat</keyword>
<keyword id="KW-0472">Membrane</keyword>
<keyword id="KW-0547">Nucleotide-binding</keyword>
<keyword id="KW-0675">Receptor</keyword>
<keyword id="KW-1185">Reference proteome</keyword>
<keyword id="KW-0677">Repeat</keyword>
<keyword id="KW-0723">Serine/threonine-protein kinase</keyword>
<keyword id="KW-0732">Signal</keyword>
<keyword id="KW-0808">Transferase</keyword>
<keyword id="KW-0812">Transmembrane</keyword>
<keyword id="KW-1133">Transmembrane helix</keyword>
<name>Y5374_ARATH</name>
<sequence length="959" mass="106058">MKEMMGVVGIILVVSSCCLSLLDAQEITHPTDVSALQYVHRKLKDPLNHLQDWKKTDPCASNWTGVICIPDPSDGFLHVKELRLLNMNLTGQLAPELGLLSNLTILNFMWNDLTGQIPPELGNLTHLIFLLLSGNQLTGSLPQELGSLSNLLILQIDYNEISGKLPTSLANLKKLKHFHMNNNSITGQIPPEYSTLTNVLHFLMDNNKLTGNLPPELAQMPSLRILQLDGSNFDGTEIPSSYGSIPNLVKLSLRNCNLEGPIPDLSKSLVLYYLDISSNKLTGEIPKNKFSANITTINLYNNLLSGSIPSNFSGLPRLQRLQVQNNNLSGEIPVIWENRILKAEEKLILDLRNNMFSNVSSVLLNPPSNVTVKLYGNPVCANVNAGKLADLCGISTLEVESPATSSETISTGDCKRQSCPVSENYDYVIGSPVACFCAAPLGIDLRLRSPSFSDFRPYKVSYMLDVASPKNLGINPYQISIDTFAWQSGPRLFMNMKIFPEYSELNSKFNSTEVQRIVDFFATFTLNTDDSLGPYEIISINTGAYKDVTIIFPKKSGMSIGVSVGIIIGAIAFFLVLSSLALVFFIKRSKRKRKTREVDMEQEHPLPKPPMNMESVKGYNFTELDSATSSFSDLSQIGRGGYGKVYKGHLPGGLVVAVKRAEQGSLQGQKEFFTEIELLSRLHHRNLVSLLGYCDQKGEQMLVYEYMPNGSLQDALSARFRQPLSLALRLRIALGSARGILYLHTEADPPIIHRDIKPSNILLDSKMNPKVADFGISKLIALDGGGVQRDHVTTIVKGTPGYVDPEYYLSHRLTEKSDVYSLGIVFLEILTGMRPISHGRNIVREVNEACDAGMMMSVIDRSMGQYSEECVKRFMELAIRCCQDNPEARPWMLEIVRELENIYGLIPKEEKPYSSPSVQSSASGMSGFAVASPRSSYTTFSEFTANQLVSGVIPSIAPR</sequence>
<protein>
    <recommendedName>
        <fullName>Probable LRR receptor-like serine/threonine-protein kinase At5g37450</fullName>
        <ecNumber>2.7.11.1</ecNumber>
    </recommendedName>
</protein>
<accession>C0LGU1</accession>
<accession>F4K767</accession>
<accession>Q9FG43</accession>
<gene>
    <name type="ordered locus">At5g37450</name>
    <name type="ORF">T25O11.15</name>
</gene>
<evidence type="ECO:0000255" key="1"/>
<evidence type="ECO:0000255" key="2">
    <source>
        <dbReference type="PROSITE-ProRule" id="PRU00159"/>
    </source>
</evidence>
<evidence type="ECO:0000255" key="3">
    <source>
        <dbReference type="PROSITE-ProRule" id="PRU10027"/>
    </source>
</evidence>
<evidence type="ECO:0000305" key="4"/>
<dbReference type="EC" id="2.7.11.1"/>
<dbReference type="EMBL" id="AP000607">
    <property type="protein sequence ID" value="BAB10966.1"/>
    <property type="status" value="ALT_SEQ"/>
    <property type="molecule type" value="Genomic_DNA"/>
</dbReference>
<dbReference type="EMBL" id="CP002688">
    <property type="protein sequence ID" value="AED94189.1"/>
    <property type="status" value="ALT_SEQ"/>
    <property type="molecule type" value="Genomic_DNA"/>
</dbReference>
<dbReference type="EMBL" id="CP002688">
    <property type="protein sequence ID" value="ANM71165.1"/>
    <property type="molecule type" value="Genomic_DNA"/>
</dbReference>
<dbReference type="EMBL" id="FJ708785">
    <property type="protein sequence ID" value="ACN59376.1"/>
    <property type="molecule type" value="mRNA"/>
</dbReference>
<dbReference type="RefSeq" id="NP_001332713.1">
    <property type="nucleotide sequence ID" value="NM_001344198.1"/>
</dbReference>
<dbReference type="RefSeq" id="NP_198561.1">
    <property type="nucleotide sequence ID" value="NM_123104.1"/>
</dbReference>
<dbReference type="SMR" id="C0LGU1"/>
<dbReference type="BioGRID" id="18973">
    <property type="interactions" value="16"/>
</dbReference>
<dbReference type="FunCoup" id="C0LGU1">
    <property type="interactions" value="53"/>
</dbReference>
<dbReference type="IntAct" id="C0LGU1">
    <property type="interactions" value="18"/>
</dbReference>
<dbReference type="STRING" id="3702.C0LGU1"/>
<dbReference type="GlyGen" id="C0LGU1">
    <property type="glycosylation" value="11 sites"/>
</dbReference>
<dbReference type="iPTMnet" id="C0LGU1"/>
<dbReference type="PaxDb" id="3702-AT5G37450.1"/>
<dbReference type="ProteomicsDB" id="242833"/>
<dbReference type="EnsemblPlants" id="AT5G37450.3">
    <property type="protein sequence ID" value="AT5G37450.3"/>
    <property type="gene ID" value="AT5G37450"/>
</dbReference>
<dbReference type="GeneID" id="833722"/>
<dbReference type="Gramene" id="AT5G37450.3">
    <property type="protein sequence ID" value="AT5G37450.3"/>
    <property type="gene ID" value="AT5G37450"/>
</dbReference>
<dbReference type="KEGG" id="ath:AT5G37450"/>
<dbReference type="Araport" id="AT5G37450"/>
<dbReference type="TAIR" id="AT5G37450"/>
<dbReference type="eggNOG" id="ENOG502QTAM">
    <property type="taxonomic scope" value="Eukaryota"/>
</dbReference>
<dbReference type="InParanoid" id="C0LGU1"/>
<dbReference type="OMA" id="LNIARFC"/>
<dbReference type="PhylomeDB" id="C0LGU1"/>
<dbReference type="PRO" id="PR:C0LGU1"/>
<dbReference type="Proteomes" id="UP000006548">
    <property type="component" value="Chromosome 5"/>
</dbReference>
<dbReference type="ExpressionAtlas" id="C0LGU1">
    <property type="expression patterns" value="baseline and differential"/>
</dbReference>
<dbReference type="GO" id="GO:0016020">
    <property type="term" value="C:membrane"/>
    <property type="evidence" value="ECO:0007669"/>
    <property type="project" value="UniProtKB-SubCell"/>
</dbReference>
<dbReference type="GO" id="GO:0005524">
    <property type="term" value="F:ATP binding"/>
    <property type="evidence" value="ECO:0007669"/>
    <property type="project" value="UniProtKB-KW"/>
</dbReference>
<dbReference type="GO" id="GO:0106310">
    <property type="term" value="F:protein serine kinase activity"/>
    <property type="evidence" value="ECO:0007669"/>
    <property type="project" value="RHEA"/>
</dbReference>
<dbReference type="GO" id="GO:0004674">
    <property type="term" value="F:protein serine/threonine kinase activity"/>
    <property type="evidence" value="ECO:0007669"/>
    <property type="project" value="UniProtKB-KW"/>
</dbReference>
<dbReference type="CDD" id="cd14066">
    <property type="entry name" value="STKc_IRAK"/>
    <property type="match status" value="1"/>
</dbReference>
<dbReference type="FunFam" id="3.80.10.10:FF:000383">
    <property type="entry name" value="Leucine-rich repeat receptor protein kinase EMS1"/>
    <property type="match status" value="1"/>
</dbReference>
<dbReference type="FunFam" id="3.80.10.10:FF:000129">
    <property type="entry name" value="Leucine-rich repeat receptor-like kinase"/>
    <property type="match status" value="1"/>
</dbReference>
<dbReference type="FunFam" id="1.10.510.10:FF:000453">
    <property type="entry name" value="LRR receptor-like serine/threonine-protein kinase HSL2"/>
    <property type="match status" value="1"/>
</dbReference>
<dbReference type="FunFam" id="3.30.200.20:FF:000039">
    <property type="entry name" value="receptor-like protein kinase FERONIA"/>
    <property type="match status" value="1"/>
</dbReference>
<dbReference type="Gene3D" id="3.30.200.20">
    <property type="entry name" value="Phosphorylase Kinase, domain 1"/>
    <property type="match status" value="1"/>
</dbReference>
<dbReference type="Gene3D" id="3.80.10.10">
    <property type="entry name" value="Ribonuclease Inhibitor"/>
    <property type="match status" value="3"/>
</dbReference>
<dbReference type="Gene3D" id="1.10.510.10">
    <property type="entry name" value="Transferase(Phosphotransferase) domain 1"/>
    <property type="match status" value="1"/>
</dbReference>
<dbReference type="InterPro" id="IPR011009">
    <property type="entry name" value="Kinase-like_dom_sf"/>
</dbReference>
<dbReference type="InterPro" id="IPR001611">
    <property type="entry name" value="Leu-rich_rpt"/>
</dbReference>
<dbReference type="InterPro" id="IPR032675">
    <property type="entry name" value="LRR_dom_sf"/>
</dbReference>
<dbReference type="InterPro" id="IPR013210">
    <property type="entry name" value="LRR_N_plant-typ"/>
</dbReference>
<dbReference type="InterPro" id="IPR000719">
    <property type="entry name" value="Prot_kinase_dom"/>
</dbReference>
<dbReference type="InterPro" id="IPR017441">
    <property type="entry name" value="Protein_kinase_ATP_BS"/>
</dbReference>
<dbReference type="InterPro" id="IPR008271">
    <property type="entry name" value="Ser/Thr_kinase_AS"/>
</dbReference>
<dbReference type="PANTHER" id="PTHR45974:SF23">
    <property type="entry name" value="PROTEIN KINASE DOMAIN-CONTAINING PROTEIN"/>
    <property type="match status" value="1"/>
</dbReference>
<dbReference type="PANTHER" id="PTHR45974">
    <property type="entry name" value="RECEPTOR-LIKE PROTEIN 55"/>
    <property type="match status" value="1"/>
</dbReference>
<dbReference type="Pfam" id="PF00560">
    <property type="entry name" value="LRR_1"/>
    <property type="match status" value="4"/>
</dbReference>
<dbReference type="Pfam" id="PF13855">
    <property type="entry name" value="LRR_8"/>
    <property type="match status" value="1"/>
</dbReference>
<dbReference type="Pfam" id="PF08263">
    <property type="entry name" value="LRRNT_2"/>
    <property type="match status" value="1"/>
</dbReference>
<dbReference type="Pfam" id="PF00069">
    <property type="entry name" value="Pkinase"/>
    <property type="match status" value="1"/>
</dbReference>
<dbReference type="SMART" id="SM00220">
    <property type="entry name" value="S_TKc"/>
    <property type="match status" value="1"/>
</dbReference>
<dbReference type="SUPFAM" id="SSF52058">
    <property type="entry name" value="L domain-like"/>
    <property type="match status" value="1"/>
</dbReference>
<dbReference type="SUPFAM" id="SSF56112">
    <property type="entry name" value="Protein kinase-like (PK-like)"/>
    <property type="match status" value="1"/>
</dbReference>
<dbReference type="PROSITE" id="PS00107">
    <property type="entry name" value="PROTEIN_KINASE_ATP"/>
    <property type="match status" value="1"/>
</dbReference>
<dbReference type="PROSITE" id="PS50011">
    <property type="entry name" value="PROTEIN_KINASE_DOM"/>
    <property type="match status" value="1"/>
</dbReference>
<dbReference type="PROSITE" id="PS00108">
    <property type="entry name" value="PROTEIN_KINASE_ST"/>
    <property type="match status" value="1"/>
</dbReference>